<organism>
    <name type="scientific">Mus musculus</name>
    <name type="common">Mouse</name>
    <dbReference type="NCBI Taxonomy" id="10090"/>
    <lineage>
        <taxon>Eukaryota</taxon>
        <taxon>Metazoa</taxon>
        <taxon>Chordata</taxon>
        <taxon>Craniata</taxon>
        <taxon>Vertebrata</taxon>
        <taxon>Euteleostomi</taxon>
        <taxon>Mammalia</taxon>
        <taxon>Eutheria</taxon>
        <taxon>Euarchontoglires</taxon>
        <taxon>Glires</taxon>
        <taxon>Rodentia</taxon>
        <taxon>Myomorpha</taxon>
        <taxon>Muroidea</taxon>
        <taxon>Muridae</taxon>
        <taxon>Murinae</taxon>
        <taxon>Mus</taxon>
        <taxon>Mus</taxon>
    </lineage>
</organism>
<dbReference type="EMBL" id="AK007491">
    <property type="protein sequence ID" value="BAB25065.1"/>
    <property type="molecule type" value="mRNA"/>
</dbReference>
<dbReference type="EMBL" id="AK134732">
    <property type="protein sequence ID" value="BAE22261.1"/>
    <property type="molecule type" value="mRNA"/>
</dbReference>
<dbReference type="EMBL" id="AK167070">
    <property type="protein sequence ID" value="BAE39230.1"/>
    <property type="molecule type" value="mRNA"/>
</dbReference>
<dbReference type="EMBL" id="AK168269">
    <property type="protein sequence ID" value="BAE40215.1"/>
    <property type="molecule type" value="mRNA"/>
</dbReference>
<dbReference type="EMBL" id="AL669952">
    <property type="status" value="NOT_ANNOTATED_CDS"/>
    <property type="molecule type" value="Genomic_DNA"/>
</dbReference>
<dbReference type="EMBL" id="BC054723">
    <property type="protein sequence ID" value="AAH54723.1"/>
    <property type="molecule type" value="mRNA"/>
</dbReference>
<dbReference type="EMBL" id="BC062876">
    <property type="protein sequence ID" value="AAH62876.1"/>
    <property type="molecule type" value="mRNA"/>
</dbReference>
<dbReference type="CCDS" id="CCDS18555.1"/>
<dbReference type="RefSeq" id="NP_081208.1">
    <property type="nucleotide sequence ID" value="NM_026932.4"/>
</dbReference>
<dbReference type="SMR" id="Q9D903"/>
<dbReference type="BioGRID" id="213211">
    <property type="interactions" value="12"/>
</dbReference>
<dbReference type="CORUM" id="Q9D903"/>
<dbReference type="DIP" id="DIP-48579N"/>
<dbReference type="FunCoup" id="Q9D903">
    <property type="interactions" value="2387"/>
</dbReference>
<dbReference type="IntAct" id="Q9D903">
    <property type="interactions" value="1"/>
</dbReference>
<dbReference type="STRING" id="10090.ENSMUSP00000030501"/>
<dbReference type="GlyGen" id="Q9D903">
    <property type="glycosylation" value="1 site, 1 O-linked glycan (1 site)"/>
</dbReference>
<dbReference type="iPTMnet" id="Q9D903"/>
<dbReference type="PhosphoSitePlus" id="Q9D903"/>
<dbReference type="PaxDb" id="10090-ENSMUSP00000030501"/>
<dbReference type="PeptideAtlas" id="Q9D903"/>
<dbReference type="ProteomicsDB" id="277666"/>
<dbReference type="Pumba" id="Q9D903"/>
<dbReference type="Antibodypedia" id="18196">
    <property type="antibodies" value="131 antibodies from 27 providers"/>
</dbReference>
<dbReference type="DNASU" id="69072"/>
<dbReference type="Ensembl" id="ENSMUST00000030501.15">
    <property type="protein sequence ID" value="ENSMUSP00000030501.9"/>
    <property type="gene ID" value="ENSMUSG00000028729.16"/>
</dbReference>
<dbReference type="GeneID" id="69072"/>
<dbReference type="KEGG" id="mmu:69072"/>
<dbReference type="UCSC" id="uc008ukn.2">
    <property type="organism name" value="mouse"/>
</dbReference>
<dbReference type="AGR" id="MGI:1916322"/>
<dbReference type="CTD" id="10969"/>
<dbReference type="MGI" id="MGI:1916322">
    <property type="gene designation" value="Ebna1bp2"/>
</dbReference>
<dbReference type="VEuPathDB" id="HostDB:ENSMUSG00000028729"/>
<dbReference type="eggNOG" id="KOG3080">
    <property type="taxonomic scope" value="Eukaryota"/>
</dbReference>
<dbReference type="GeneTree" id="ENSGT00390000014984"/>
<dbReference type="HOGENOM" id="CLU_036007_1_0_1"/>
<dbReference type="InParanoid" id="Q9D903"/>
<dbReference type="OMA" id="RETMFHR"/>
<dbReference type="OrthoDB" id="443772at2759"/>
<dbReference type="PhylomeDB" id="Q9D903"/>
<dbReference type="TreeFam" id="TF314642"/>
<dbReference type="Reactome" id="R-MMU-6791226">
    <property type="pathway name" value="Major pathway of rRNA processing in the nucleolus and cytosol"/>
</dbReference>
<dbReference type="BioGRID-ORCS" id="69072">
    <property type="hits" value="23 hits in 78 CRISPR screens"/>
</dbReference>
<dbReference type="ChiTaRS" id="Ebna1bp2">
    <property type="organism name" value="mouse"/>
</dbReference>
<dbReference type="PRO" id="PR:Q9D903"/>
<dbReference type="Proteomes" id="UP000000589">
    <property type="component" value="Chromosome 4"/>
</dbReference>
<dbReference type="RNAct" id="Q9D903">
    <property type="molecule type" value="protein"/>
</dbReference>
<dbReference type="Bgee" id="ENSMUSG00000028729">
    <property type="expression patterns" value="Expressed in embryonic post-anal tail and 261 other cell types or tissues"/>
</dbReference>
<dbReference type="ExpressionAtlas" id="Q9D903">
    <property type="expression patterns" value="baseline and differential"/>
</dbReference>
<dbReference type="GO" id="GO:0005694">
    <property type="term" value="C:chromosome"/>
    <property type="evidence" value="ECO:0007669"/>
    <property type="project" value="Ensembl"/>
</dbReference>
<dbReference type="GO" id="GO:0005730">
    <property type="term" value="C:nucleolus"/>
    <property type="evidence" value="ECO:0000250"/>
    <property type="project" value="UniProtKB"/>
</dbReference>
<dbReference type="GO" id="GO:0042254">
    <property type="term" value="P:ribosome biogenesis"/>
    <property type="evidence" value="ECO:0007669"/>
    <property type="project" value="UniProtKB-KW"/>
</dbReference>
<dbReference type="InterPro" id="IPR008610">
    <property type="entry name" value="Ebp2"/>
</dbReference>
<dbReference type="PANTHER" id="PTHR13028">
    <property type="entry name" value="RRNA PROCESSING PROTEIN EBNA1-BINDING PROTEIN-RELATED"/>
    <property type="match status" value="1"/>
</dbReference>
<dbReference type="PANTHER" id="PTHR13028:SF0">
    <property type="entry name" value="RRNA-PROCESSING PROTEIN EBP2-RELATED"/>
    <property type="match status" value="1"/>
</dbReference>
<dbReference type="Pfam" id="PF05890">
    <property type="entry name" value="Ebp2"/>
    <property type="match status" value="1"/>
</dbReference>
<proteinExistence type="evidence at transcript level"/>
<comment type="function">
    <text evidence="1">Required for the processing of the 27S pre-rRNA.</text>
</comment>
<comment type="subunit">
    <text evidence="2">Interacts with WDR46.</text>
</comment>
<comment type="subcellular location">
    <subcellularLocation>
        <location evidence="2">Nucleus</location>
        <location evidence="2">Nucleolus</location>
    </subcellularLocation>
</comment>
<comment type="similarity">
    <text evidence="5">Belongs to the EBP2 family.</text>
</comment>
<feature type="chain" id="PRO_0000119994" description="Probable rRNA-processing protein EBP2">
    <location>
        <begin position="1"/>
        <end position="306"/>
    </location>
</feature>
<feature type="region of interest" description="Disordered" evidence="4">
    <location>
        <begin position="1"/>
        <end position="20"/>
    </location>
</feature>
<feature type="region of interest" description="Disordered" evidence="4">
    <location>
        <begin position="75"/>
        <end position="103"/>
    </location>
</feature>
<feature type="region of interest" description="Disordered" evidence="4">
    <location>
        <begin position="150"/>
        <end position="169"/>
    </location>
</feature>
<feature type="region of interest" description="Disordered" evidence="4">
    <location>
        <begin position="213"/>
        <end position="306"/>
    </location>
</feature>
<feature type="coiled-coil region" evidence="3">
    <location>
        <begin position="135"/>
        <end position="171"/>
    </location>
</feature>
<feature type="compositionally biased region" description="Polar residues" evidence="4">
    <location>
        <begin position="81"/>
        <end position="90"/>
    </location>
</feature>
<feature type="compositionally biased region" description="Basic and acidic residues" evidence="4">
    <location>
        <begin position="91"/>
        <end position="103"/>
    </location>
</feature>
<feature type="compositionally biased region" description="Basic and acidic residues" evidence="4">
    <location>
        <begin position="213"/>
        <end position="224"/>
    </location>
</feature>
<feature type="compositionally biased region" description="Basic residues" evidence="4">
    <location>
        <begin position="274"/>
        <end position="306"/>
    </location>
</feature>
<feature type="modified residue" description="N-acetylmethionine" evidence="2">
    <location>
        <position position="1"/>
    </location>
</feature>
<feature type="modified residue" description="Phosphothreonine" evidence="2">
    <location>
        <position position="3"/>
    </location>
</feature>
<feature type="modified residue" description="Phosphoserine" evidence="2">
    <location>
        <position position="7"/>
    </location>
</feature>
<feature type="modified residue" description="Phosphoserine" evidence="2">
    <location>
        <position position="9"/>
    </location>
</feature>
<feature type="modified residue" description="Phosphoserine" evidence="2">
    <location>
        <position position="11"/>
    </location>
</feature>
<feature type="modified residue" description="Phosphoserine" evidence="2">
    <location>
        <position position="13"/>
    </location>
</feature>
<feature type="modified residue" description="Phosphoserine" evidence="2">
    <location>
        <position position="264"/>
    </location>
</feature>
<feature type="modified residue" description="Phosphoserine" evidence="2">
    <location>
        <position position="270"/>
    </location>
</feature>
<feature type="cross-link" description="Glycyl lysine isopeptide (Lys-Gly) (interchain with G-Cter in SUMO2)" evidence="2">
    <location>
        <position position="93"/>
    </location>
</feature>
<feature type="cross-link" description="Glycyl lysine isopeptide (Lys-Gly) (interchain with G-Cter in SUMO2)" evidence="2">
    <location>
        <position position="179"/>
    </location>
</feature>
<feature type="cross-link" description="Glycyl lysine isopeptide (Lys-Gly) (interchain with G-Cter in SUMO2)" evidence="2">
    <location>
        <position position="218"/>
    </location>
</feature>
<keyword id="KW-0007">Acetylation</keyword>
<keyword id="KW-0175">Coiled coil</keyword>
<keyword id="KW-1017">Isopeptide bond</keyword>
<keyword id="KW-0539">Nucleus</keyword>
<keyword id="KW-0597">Phosphoprotein</keyword>
<keyword id="KW-1185">Reference proteome</keyword>
<keyword id="KW-0690">Ribosome biogenesis</keyword>
<keyword id="KW-0832">Ubl conjugation</keyword>
<evidence type="ECO:0000250" key="1"/>
<evidence type="ECO:0000250" key="2">
    <source>
        <dbReference type="UniProtKB" id="Q99848"/>
    </source>
</evidence>
<evidence type="ECO:0000255" key="3"/>
<evidence type="ECO:0000256" key="4">
    <source>
        <dbReference type="SAM" id="MobiDB-lite"/>
    </source>
</evidence>
<evidence type="ECO:0000305" key="5"/>
<gene>
    <name type="primary">Ebna1bp2</name>
    <name type="synonym">Ebp2</name>
</gene>
<sequence length="306" mass="34703">MDTPPLSESDSESDACLASDQELQDAFSRGLLKPGLNVVLEKPKKAVNDVSGLKQCLAEFRRDLEWVERLDVTLGPVPEVSETQPTPQNQDQKKGVNPEDDFQREMSFYRQAQAAVLAVLPRLHQLQVPTKRPTDYFAEMAKSDQQMQKIRQKLQTKQAAMEKSEKAKQLRALRKYGKKVQTEVLQKRQREKAHMMNAIKKYQKGFSDKLDFLEGDQKPVERSAKAGGKGQQMSKGPNAKRRYKNQKFGFGGKKKGSKWNTKESYDDVSSFRAKVAHGKGSRRPGKKGANKRPGKRARQKLKSKAR</sequence>
<protein>
    <recommendedName>
        <fullName>Probable rRNA-processing protein EBP2</fullName>
    </recommendedName>
</protein>
<reference key="1">
    <citation type="journal article" date="2005" name="Science">
        <title>The transcriptional landscape of the mammalian genome.</title>
        <authorList>
            <person name="Carninci P."/>
            <person name="Kasukawa T."/>
            <person name="Katayama S."/>
            <person name="Gough J."/>
            <person name="Frith M.C."/>
            <person name="Maeda N."/>
            <person name="Oyama R."/>
            <person name="Ravasi T."/>
            <person name="Lenhard B."/>
            <person name="Wells C."/>
            <person name="Kodzius R."/>
            <person name="Shimokawa K."/>
            <person name="Bajic V.B."/>
            <person name="Brenner S.E."/>
            <person name="Batalov S."/>
            <person name="Forrest A.R."/>
            <person name="Zavolan M."/>
            <person name="Davis M.J."/>
            <person name="Wilming L.G."/>
            <person name="Aidinis V."/>
            <person name="Allen J.E."/>
            <person name="Ambesi-Impiombato A."/>
            <person name="Apweiler R."/>
            <person name="Aturaliya R.N."/>
            <person name="Bailey T.L."/>
            <person name="Bansal M."/>
            <person name="Baxter L."/>
            <person name="Beisel K.W."/>
            <person name="Bersano T."/>
            <person name="Bono H."/>
            <person name="Chalk A.M."/>
            <person name="Chiu K.P."/>
            <person name="Choudhary V."/>
            <person name="Christoffels A."/>
            <person name="Clutterbuck D.R."/>
            <person name="Crowe M.L."/>
            <person name="Dalla E."/>
            <person name="Dalrymple B.P."/>
            <person name="de Bono B."/>
            <person name="Della Gatta G."/>
            <person name="di Bernardo D."/>
            <person name="Down T."/>
            <person name="Engstrom P."/>
            <person name="Fagiolini M."/>
            <person name="Faulkner G."/>
            <person name="Fletcher C.F."/>
            <person name="Fukushima T."/>
            <person name="Furuno M."/>
            <person name="Futaki S."/>
            <person name="Gariboldi M."/>
            <person name="Georgii-Hemming P."/>
            <person name="Gingeras T.R."/>
            <person name="Gojobori T."/>
            <person name="Green R.E."/>
            <person name="Gustincich S."/>
            <person name="Harbers M."/>
            <person name="Hayashi Y."/>
            <person name="Hensch T.K."/>
            <person name="Hirokawa N."/>
            <person name="Hill D."/>
            <person name="Huminiecki L."/>
            <person name="Iacono M."/>
            <person name="Ikeo K."/>
            <person name="Iwama A."/>
            <person name="Ishikawa T."/>
            <person name="Jakt M."/>
            <person name="Kanapin A."/>
            <person name="Katoh M."/>
            <person name="Kawasawa Y."/>
            <person name="Kelso J."/>
            <person name="Kitamura H."/>
            <person name="Kitano H."/>
            <person name="Kollias G."/>
            <person name="Krishnan S.P."/>
            <person name="Kruger A."/>
            <person name="Kummerfeld S.K."/>
            <person name="Kurochkin I.V."/>
            <person name="Lareau L.F."/>
            <person name="Lazarevic D."/>
            <person name="Lipovich L."/>
            <person name="Liu J."/>
            <person name="Liuni S."/>
            <person name="McWilliam S."/>
            <person name="Madan Babu M."/>
            <person name="Madera M."/>
            <person name="Marchionni L."/>
            <person name="Matsuda H."/>
            <person name="Matsuzawa S."/>
            <person name="Miki H."/>
            <person name="Mignone F."/>
            <person name="Miyake S."/>
            <person name="Morris K."/>
            <person name="Mottagui-Tabar S."/>
            <person name="Mulder N."/>
            <person name="Nakano N."/>
            <person name="Nakauchi H."/>
            <person name="Ng P."/>
            <person name="Nilsson R."/>
            <person name="Nishiguchi S."/>
            <person name="Nishikawa S."/>
            <person name="Nori F."/>
            <person name="Ohara O."/>
            <person name="Okazaki Y."/>
            <person name="Orlando V."/>
            <person name="Pang K.C."/>
            <person name="Pavan W.J."/>
            <person name="Pavesi G."/>
            <person name="Pesole G."/>
            <person name="Petrovsky N."/>
            <person name="Piazza S."/>
            <person name="Reed J."/>
            <person name="Reid J.F."/>
            <person name="Ring B.Z."/>
            <person name="Ringwald M."/>
            <person name="Rost B."/>
            <person name="Ruan Y."/>
            <person name="Salzberg S.L."/>
            <person name="Sandelin A."/>
            <person name="Schneider C."/>
            <person name="Schoenbach C."/>
            <person name="Sekiguchi K."/>
            <person name="Semple C.A."/>
            <person name="Seno S."/>
            <person name="Sessa L."/>
            <person name="Sheng Y."/>
            <person name="Shibata Y."/>
            <person name="Shimada H."/>
            <person name="Shimada K."/>
            <person name="Silva D."/>
            <person name="Sinclair B."/>
            <person name="Sperling S."/>
            <person name="Stupka E."/>
            <person name="Sugiura K."/>
            <person name="Sultana R."/>
            <person name="Takenaka Y."/>
            <person name="Taki K."/>
            <person name="Tammoja K."/>
            <person name="Tan S.L."/>
            <person name="Tang S."/>
            <person name="Taylor M.S."/>
            <person name="Tegner J."/>
            <person name="Teichmann S.A."/>
            <person name="Ueda H.R."/>
            <person name="van Nimwegen E."/>
            <person name="Verardo R."/>
            <person name="Wei C.L."/>
            <person name="Yagi K."/>
            <person name="Yamanishi H."/>
            <person name="Zabarovsky E."/>
            <person name="Zhu S."/>
            <person name="Zimmer A."/>
            <person name="Hide W."/>
            <person name="Bult C."/>
            <person name="Grimmond S.M."/>
            <person name="Teasdale R.D."/>
            <person name="Liu E.T."/>
            <person name="Brusic V."/>
            <person name="Quackenbush J."/>
            <person name="Wahlestedt C."/>
            <person name="Mattick J.S."/>
            <person name="Hume D.A."/>
            <person name="Kai C."/>
            <person name="Sasaki D."/>
            <person name="Tomaru Y."/>
            <person name="Fukuda S."/>
            <person name="Kanamori-Katayama M."/>
            <person name="Suzuki M."/>
            <person name="Aoki J."/>
            <person name="Arakawa T."/>
            <person name="Iida J."/>
            <person name="Imamura K."/>
            <person name="Itoh M."/>
            <person name="Kato T."/>
            <person name="Kawaji H."/>
            <person name="Kawagashira N."/>
            <person name="Kawashima T."/>
            <person name="Kojima M."/>
            <person name="Kondo S."/>
            <person name="Konno H."/>
            <person name="Nakano K."/>
            <person name="Ninomiya N."/>
            <person name="Nishio T."/>
            <person name="Okada M."/>
            <person name="Plessy C."/>
            <person name="Shibata K."/>
            <person name="Shiraki T."/>
            <person name="Suzuki S."/>
            <person name="Tagami M."/>
            <person name="Waki K."/>
            <person name="Watahiki A."/>
            <person name="Okamura-Oho Y."/>
            <person name="Suzuki H."/>
            <person name="Kawai J."/>
            <person name="Hayashizaki Y."/>
        </authorList>
    </citation>
    <scope>NUCLEOTIDE SEQUENCE [LARGE SCALE MRNA]</scope>
    <source>
        <strain>C57BL/6J</strain>
        <tissue>Medulla oblongata</tissue>
        <tissue>Pancreas</tissue>
    </source>
</reference>
<reference key="2">
    <citation type="journal article" date="2009" name="PLoS Biol.">
        <title>Lineage-specific biology revealed by a finished genome assembly of the mouse.</title>
        <authorList>
            <person name="Church D.M."/>
            <person name="Goodstadt L."/>
            <person name="Hillier L.W."/>
            <person name="Zody M.C."/>
            <person name="Goldstein S."/>
            <person name="She X."/>
            <person name="Bult C.J."/>
            <person name="Agarwala R."/>
            <person name="Cherry J.L."/>
            <person name="DiCuccio M."/>
            <person name="Hlavina W."/>
            <person name="Kapustin Y."/>
            <person name="Meric P."/>
            <person name="Maglott D."/>
            <person name="Birtle Z."/>
            <person name="Marques A.C."/>
            <person name="Graves T."/>
            <person name="Zhou S."/>
            <person name="Teague B."/>
            <person name="Potamousis K."/>
            <person name="Churas C."/>
            <person name="Place M."/>
            <person name="Herschleb J."/>
            <person name="Runnheim R."/>
            <person name="Forrest D."/>
            <person name="Amos-Landgraf J."/>
            <person name="Schwartz D.C."/>
            <person name="Cheng Z."/>
            <person name="Lindblad-Toh K."/>
            <person name="Eichler E.E."/>
            <person name="Ponting C.P."/>
        </authorList>
    </citation>
    <scope>NUCLEOTIDE SEQUENCE [LARGE SCALE GENOMIC DNA]</scope>
    <source>
        <strain>C57BL/6J</strain>
    </source>
</reference>
<reference key="3">
    <citation type="journal article" date="2004" name="Genome Res.">
        <title>The status, quality, and expansion of the NIH full-length cDNA project: the Mammalian Gene Collection (MGC).</title>
        <authorList>
            <consortium name="The MGC Project Team"/>
        </authorList>
    </citation>
    <scope>NUCLEOTIDE SEQUENCE [LARGE SCALE MRNA]</scope>
    <source>
        <strain>C57BL/6J</strain>
        <tissue>Brain</tissue>
    </source>
</reference>
<accession>Q9D903</accession>
<accession>A2ACZ0</accession>
<accession>Q3TKB5</accession>
<name>EBP2_MOUSE</name>